<proteinExistence type="evidence at protein level"/>
<reference key="1">
    <citation type="journal article" date="2001" name="FEMS Microbiol. Lett.">
        <title>Na+-driven multidrug efflux pump VcmA from Vibrio cholerae non-O1, a non-halophilic bacterium.</title>
        <authorList>
            <person name="Huda M.N."/>
            <person name="Morita Y."/>
            <person name="Kuroda T."/>
            <person name="Mizushima T."/>
            <person name="Tsuchiya T."/>
        </authorList>
    </citation>
    <scope>NUCLEOTIDE SEQUENCE [GENOMIC DNA]</scope>
    <scope>FUNCTION</scope>
    <source>
        <strain>NCTC 4716</strain>
    </source>
</reference>
<reference key="2">
    <citation type="journal article" date="2000" name="Nature">
        <title>DNA sequence of both chromosomes of the cholera pathogen Vibrio cholerae.</title>
        <authorList>
            <person name="Heidelberg J.F."/>
            <person name="Eisen J.A."/>
            <person name="Nelson W.C."/>
            <person name="Clayton R.A."/>
            <person name="Gwinn M.L."/>
            <person name="Dodson R.J."/>
            <person name="Haft D.H."/>
            <person name="Hickey E.K."/>
            <person name="Peterson J.D."/>
            <person name="Umayam L.A."/>
            <person name="Gill S.R."/>
            <person name="Nelson K.E."/>
            <person name="Read T.D."/>
            <person name="Tettelin H."/>
            <person name="Richardson D.L."/>
            <person name="Ermolaeva M.D."/>
            <person name="Vamathevan J.J."/>
            <person name="Bass S."/>
            <person name="Qin H."/>
            <person name="Dragoi I."/>
            <person name="Sellers P."/>
            <person name="McDonald L.A."/>
            <person name="Utterback T.R."/>
            <person name="Fleischmann R.D."/>
            <person name="Nierman W.C."/>
            <person name="White O."/>
            <person name="Salzberg S.L."/>
            <person name="Smith H.O."/>
            <person name="Colwell R.R."/>
            <person name="Mekalanos J.J."/>
            <person name="Venter J.C."/>
            <person name="Fraser C.M."/>
        </authorList>
    </citation>
    <scope>NUCLEOTIDE SEQUENCE [LARGE SCALE GENOMIC DNA]</scope>
    <source>
        <strain>ATCC 39315 / El Tor Inaba N16961</strain>
    </source>
</reference>
<sequence length="457" mass="49424">MHRYKKEASNLIKLATPVLIASVAQTGMGFVDTIMAGGVSAIDMAAVSIAASIWLPSILFGVGLLMALVPVVAQLNGAGRQHKIPFEVHQGLILALLVSVPIIAVLFQTQFIIRFMDVEEAMATKTVGYMHAVIFAVPAYLLFQALRSFTDGMSLTKPAMVIGFIGLLLNIPLNWIFVYGKFGAPELGGVGCGVATAIVYWIMLLLLLFYIVTSKRLAHVKVFETFHKPQPKELIRLFRLGFPVAAALFFEVTLFAVVALLVAPLGSTVVAAHQVALNFSSLVFMFPMSIGAAVSIRVGHKLGEQDTKGAAIAANVGLMTGLATACITALLTVLFREQIALLYTENQVVVALAMQLLLFAAIYQCMDAVQVVAAGSLRGYKDMTAIFHRTFISYWVLGLPTGYILGMTNWLTEQPLGAKGFWLGFIIGLSAAALMLGQRLYWLQKQSDDVQLHLAAK</sequence>
<name>NORM_VIBCH</name>
<gene>
    <name type="primary">norM</name>
    <name type="synonym">vcmA</name>
    <name type="ordered locus">VC_1540</name>
</gene>
<dbReference type="EMBL" id="AB063193">
    <property type="protein sequence ID" value="BAB79260.1"/>
    <property type="molecule type" value="Genomic_DNA"/>
</dbReference>
<dbReference type="EMBL" id="AE003852">
    <property type="protein sequence ID" value="AAF94694.1"/>
    <property type="status" value="ALT_INIT"/>
    <property type="molecule type" value="Genomic_DNA"/>
</dbReference>
<dbReference type="PIR" id="H82186">
    <property type="entry name" value="H82186"/>
</dbReference>
<dbReference type="RefSeq" id="NP_231180.2">
    <property type="nucleotide sequence ID" value="NC_002505.1"/>
</dbReference>
<dbReference type="RefSeq" id="WP_000555132.1">
    <property type="nucleotide sequence ID" value="NZ_LT906614.1"/>
</dbReference>
<dbReference type="PDB" id="7PHP">
    <property type="method" value="EM"/>
    <property type="resolution" value="3.47 A"/>
    <property type="chains" value="A=1-457"/>
</dbReference>
<dbReference type="PDBsum" id="7PHP"/>
<dbReference type="SMR" id="Q9KRU4"/>
<dbReference type="STRING" id="243277.VC_1540"/>
<dbReference type="TCDB" id="2.A.66.1.2">
    <property type="family name" value="the multidrug/oligosaccharidyl-lipid/polysaccharide (mop) flippase superfamily"/>
</dbReference>
<dbReference type="ABCD" id="Q9KRU4">
    <property type="antibodies" value="1 sequenced antibody"/>
</dbReference>
<dbReference type="DNASU" id="2613919"/>
<dbReference type="EnsemblBacteria" id="AAF94694">
    <property type="protein sequence ID" value="AAF94694"/>
    <property type="gene ID" value="VC_1540"/>
</dbReference>
<dbReference type="KEGG" id="vch:VC_1540"/>
<dbReference type="PATRIC" id="fig|243277.26.peg.1469"/>
<dbReference type="eggNOG" id="COG0534">
    <property type="taxonomic scope" value="Bacteria"/>
</dbReference>
<dbReference type="HOGENOM" id="CLU_012893_6_0_6"/>
<dbReference type="Proteomes" id="UP000000584">
    <property type="component" value="Chromosome 1"/>
</dbReference>
<dbReference type="GO" id="GO:0016020">
    <property type="term" value="C:membrane"/>
    <property type="evidence" value="ECO:0000318"/>
    <property type="project" value="GO_Central"/>
</dbReference>
<dbReference type="GO" id="GO:0005886">
    <property type="term" value="C:plasma membrane"/>
    <property type="evidence" value="ECO:0007669"/>
    <property type="project" value="UniProtKB-SubCell"/>
</dbReference>
<dbReference type="GO" id="GO:0015297">
    <property type="term" value="F:antiporter activity"/>
    <property type="evidence" value="ECO:0007669"/>
    <property type="project" value="UniProtKB-KW"/>
</dbReference>
<dbReference type="GO" id="GO:0042910">
    <property type="term" value="F:xenobiotic transmembrane transporter activity"/>
    <property type="evidence" value="ECO:0000318"/>
    <property type="project" value="GO_Central"/>
</dbReference>
<dbReference type="GO" id="GO:0046677">
    <property type="term" value="P:response to antibiotic"/>
    <property type="evidence" value="ECO:0000318"/>
    <property type="project" value="GO_Central"/>
</dbReference>
<dbReference type="GO" id="GO:0006814">
    <property type="term" value="P:sodium ion transport"/>
    <property type="evidence" value="ECO:0007669"/>
    <property type="project" value="UniProtKB-KW"/>
</dbReference>
<dbReference type="CDD" id="cd13131">
    <property type="entry name" value="MATE_NorM_like"/>
    <property type="match status" value="1"/>
</dbReference>
<dbReference type="InterPro" id="IPR002528">
    <property type="entry name" value="MATE_fam"/>
</dbReference>
<dbReference type="InterPro" id="IPR050222">
    <property type="entry name" value="MATE_MdtK"/>
</dbReference>
<dbReference type="InterPro" id="IPR048279">
    <property type="entry name" value="MdtK-like"/>
</dbReference>
<dbReference type="NCBIfam" id="TIGR00797">
    <property type="entry name" value="matE"/>
    <property type="match status" value="1"/>
</dbReference>
<dbReference type="PANTHER" id="PTHR43298:SF2">
    <property type="entry name" value="FMN_FAD EXPORTER YEEO-RELATED"/>
    <property type="match status" value="1"/>
</dbReference>
<dbReference type="PANTHER" id="PTHR43298">
    <property type="entry name" value="MULTIDRUG RESISTANCE PROTEIN NORM-RELATED"/>
    <property type="match status" value="1"/>
</dbReference>
<dbReference type="Pfam" id="PF01554">
    <property type="entry name" value="MatE"/>
    <property type="match status" value="2"/>
</dbReference>
<dbReference type="PIRSF" id="PIRSF006603">
    <property type="entry name" value="DinF"/>
    <property type="match status" value="1"/>
</dbReference>
<organism>
    <name type="scientific">Vibrio cholerae serotype O1 (strain ATCC 39315 / El Tor Inaba N16961)</name>
    <dbReference type="NCBI Taxonomy" id="243277"/>
    <lineage>
        <taxon>Bacteria</taxon>
        <taxon>Pseudomonadati</taxon>
        <taxon>Pseudomonadota</taxon>
        <taxon>Gammaproteobacteria</taxon>
        <taxon>Vibrionales</taxon>
        <taxon>Vibrionaceae</taxon>
        <taxon>Vibrio</taxon>
    </lineage>
</organism>
<protein>
    <recommendedName>
        <fullName>Multidrug resistance protein NorM</fullName>
    </recommendedName>
    <alternativeName>
        <fullName>Multidrug-efflux transporter</fullName>
    </alternativeName>
    <alternativeName>
        <fullName>Na(+)/drug antiporter</fullName>
    </alternativeName>
</protein>
<keyword id="KW-0002">3D-structure</keyword>
<keyword id="KW-0046">Antibiotic resistance</keyword>
<keyword id="KW-0050">Antiport</keyword>
<keyword id="KW-0997">Cell inner membrane</keyword>
<keyword id="KW-1003">Cell membrane</keyword>
<keyword id="KW-0406">Ion transport</keyword>
<keyword id="KW-0472">Membrane</keyword>
<keyword id="KW-1185">Reference proteome</keyword>
<keyword id="KW-0915">Sodium</keyword>
<keyword id="KW-0739">Sodium transport</keyword>
<keyword id="KW-0812">Transmembrane</keyword>
<keyword id="KW-1133">Transmembrane helix</keyword>
<keyword id="KW-0813">Transport</keyword>
<comment type="function">
    <text evidence="3">Multidrug efflux pump that functions as a Na(+)/drug antiporter. Confers resistance to norfloxacin, ciprofloxacin, ofloxacin, daunomycin, doxorubicin, streptomycin, kanamycin, ethidium bromide and acriflavine.</text>
</comment>
<comment type="subcellular location">
    <subcellularLocation>
        <location evidence="1">Cell inner membrane</location>
        <topology evidence="1">Multi-pass membrane protein</topology>
    </subcellularLocation>
</comment>
<comment type="similarity">
    <text evidence="4">Belongs to the multi antimicrobial extrusion (MATE) (TC 2.A.66.1) family.</text>
</comment>
<comment type="sequence caution" evidence="4">
    <conflict type="erroneous initiation">
        <sequence resource="EMBL-CDS" id="AAF94694"/>
    </conflict>
</comment>
<evidence type="ECO:0000250" key="1"/>
<evidence type="ECO:0000255" key="2"/>
<evidence type="ECO:0000269" key="3">
    <source>
    </source>
</evidence>
<evidence type="ECO:0000305" key="4"/>
<evidence type="ECO:0007829" key="5">
    <source>
        <dbReference type="PDB" id="7PHP"/>
    </source>
</evidence>
<feature type="chain" id="PRO_0000164244" description="Multidrug resistance protein NorM">
    <location>
        <begin position="1"/>
        <end position="457"/>
    </location>
</feature>
<feature type="transmembrane region" description="Helical" evidence="2">
    <location>
        <begin position="30"/>
        <end position="50"/>
    </location>
</feature>
<feature type="transmembrane region" description="Helical" evidence="2">
    <location>
        <begin position="53"/>
        <end position="73"/>
    </location>
</feature>
<feature type="transmembrane region" description="Helical" evidence="2">
    <location>
        <begin position="93"/>
        <end position="113"/>
    </location>
</feature>
<feature type="transmembrane region" description="Helical" evidence="2">
    <location>
        <begin position="126"/>
        <end position="146"/>
    </location>
</feature>
<feature type="transmembrane region" description="Helical" evidence="2">
    <location>
        <begin position="159"/>
        <end position="179"/>
    </location>
</feature>
<feature type="transmembrane region" description="Helical" evidence="2">
    <location>
        <begin position="192"/>
        <end position="212"/>
    </location>
</feature>
<feature type="transmembrane region" description="Helical" evidence="2">
    <location>
        <begin position="242"/>
        <end position="262"/>
    </location>
</feature>
<feature type="transmembrane region" description="Helical" evidence="2">
    <location>
        <begin position="276"/>
        <end position="296"/>
    </location>
</feature>
<feature type="transmembrane region" description="Helical" evidence="2">
    <location>
        <begin position="315"/>
        <end position="335"/>
    </location>
</feature>
<feature type="transmembrane region" description="Helical" evidence="2">
    <location>
        <begin position="348"/>
        <end position="368"/>
    </location>
</feature>
<feature type="transmembrane region" description="Helical" evidence="2">
    <location>
        <begin position="391"/>
        <end position="411"/>
    </location>
</feature>
<feature type="transmembrane region" description="Helical" evidence="2">
    <location>
        <begin position="416"/>
        <end position="436"/>
    </location>
</feature>
<feature type="sequence variant" description="In strain: NCTC 4716.">
    <original>V</original>
    <variation>I</variation>
    <location>
        <position position="100"/>
    </location>
</feature>
<feature type="helix" evidence="5">
    <location>
        <begin position="4"/>
        <end position="35"/>
    </location>
</feature>
<feature type="strand" evidence="5">
    <location>
        <begin position="41"/>
        <end position="43"/>
    </location>
</feature>
<feature type="helix" evidence="5">
    <location>
        <begin position="46"/>
        <end position="49"/>
    </location>
</feature>
<feature type="helix" evidence="5">
    <location>
        <begin position="51"/>
        <end position="63"/>
    </location>
</feature>
<feature type="helix" evidence="5">
    <location>
        <begin position="68"/>
        <end position="78"/>
    </location>
</feature>
<feature type="helix" evidence="5">
    <location>
        <begin position="84"/>
        <end position="107"/>
    </location>
</feature>
<feature type="helix" evidence="5">
    <location>
        <begin position="109"/>
        <end position="113"/>
    </location>
</feature>
<feature type="turn" evidence="5">
    <location>
        <begin position="114"/>
        <end position="117"/>
    </location>
</feature>
<feature type="helix" evidence="5">
    <location>
        <begin position="120"/>
        <end position="133"/>
    </location>
</feature>
<feature type="helix" evidence="5">
    <location>
        <begin position="134"/>
        <end position="136"/>
    </location>
</feature>
<feature type="helix" evidence="5">
    <location>
        <begin position="137"/>
        <end position="152"/>
    </location>
</feature>
<feature type="helix" evidence="5">
    <location>
        <begin position="157"/>
        <end position="178"/>
    </location>
</feature>
<feature type="turn" evidence="5">
    <location>
        <begin position="188"/>
        <end position="190"/>
    </location>
</feature>
<feature type="helix" evidence="5">
    <location>
        <begin position="191"/>
        <end position="213"/>
    </location>
</feature>
<feature type="strand" evidence="5">
    <location>
        <begin position="215"/>
        <end position="217"/>
    </location>
</feature>
<feature type="turn" evidence="5">
    <location>
        <begin position="218"/>
        <end position="220"/>
    </location>
</feature>
<feature type="helix" evidence="5">
    <location>
        <begin position="231"/>
        <end position="262"/>
    </location>
</feature>
<feature type="helix" evidence="5">
    <location>
        <begin position="267"/>
        <end position="282"/>
    </location>
</feature>
<feature type="helix" evidence="5">
    <location>
        <begin position="285"/>
        <end position="303"/>
    </location>
</feature>
<feature type="helix" evidence="5">
    <location>
        <begin position="308"/>
        <end position="333"/>
    </location>
</feature>
<feature type="turn" evidence="5">
    <location>
        <begin position="334"/>
        <end position="337"/>
    </location>
</feature>
<feature type="helix" evidence="5">
    <location>
        <begin position="338"/>
        <end position="343"/>
    </location>
</feature>
<feature type="helix" evidence="5">
    <location>
        <begin position="347"/>
        <end position="379"/>
    </location>
</feature>
<feature type="helix" evidence="5">
    <location>
        <begin position="385"/>
        <end position="395"/>
    </location>
</feature>
<feature type="helix" evidence="5">
    <location>
        <begin position="398"/>
        <end position="405"/>
    </location>
</feature>
<feature type="turn" evidence="5">
    <location>
        <begin position="406"/>
        <end position="408"/>
    </location>
</feature>
<feature type="helix" evidence="5">
    <location>
        <begin position="418"/>
        <end position="444"/>
    </location>
</feature>
<feature type="helix" evidence="5">
    <location>
        <begin position="448"/>
        <end position="456"/>
    </location>
</feature>
<accession>Q9KRU4</accession>
<accession>Q8VUU4</accession>